<keyword id="KW-0002">3D-structure</keyword>
<keyword id="KW-0966">Cell projection</keyword>
<keyword id="KW-0175">Coiled coil</keyword>
<keyword id="KW-1185">Reference proteome</keyword>
<reference evidence="7" key="1">
    <citation type="journal article" date="2006" name="PLoS Biol.">
        <title>Macronuclear genome sequence of the ciliate Tetrahymena thermophila, a model eukaryote.</title>
        <authorList>
            <person name="Eisen J.A."/>
            <person name="Coyne R.S."/>
            <person name="Wu M."/>
            <person name="Wu D."/>
            <person name="Thiagarajan M."/>
            <person name="Wortman J.R."/>
            <person name="Badger J.H."/>
            <person name="Ren Q."/>
            <person name="Amedeo P."/>
            <person name="Jones K.M."/>
            <person name="Tallon L.J."/>
            <person name="Delcher A.L."/>
            <person name="Salzberg S.L."/>
            <person name="Silva J.C."/>
            <person name="Haas B.J."/>
            <person name="Majoros W.H."/>
            <person name="Farzad M."/>
            <person name="Carlton J.M."/>
            <person name="Smith R.K. Jr."/>
            <person name="Garg J."/>
            <person name="Pearlman R.E."/>
            <person name="Karrer K.M."/>
            <person name="Sun L."/>
            <person name="Manning G."/>
            <person name="Elde N.C."/>
            <person name="Turkewitz A.P."/>
            <person name="Asai D.J."/>
            <person name="Wilkes D.E."/>
            <person name="Wang Y."/>
            <person name="Cai H."/>
            <person name="Collins K."/>
            <person name="Stewart B.A."/>
            <person name="Lee S.R."/>
            <person name="Wilamowska K."/>
            <person name="Weinberg Z."/>
            <person name="Ruzzo W.L."/>
            <person name="Wloga D."/>
            <person name="Gaertig J."/>
            <person name="Frankel J."/>
            <person name="Tsao C.-C."/>
            <person name="Gorovsky M.A."/>
            <person name="Keeling P.J."/>
            <person name="Waller R.F."/>
            <person name="Patron N.J."/>
            <person name="Cherry J.M."/>
            <person name="Stover N.A."/>
            <person name="Krieger C.J."/>
            <person name="del Toro C."/>
            <person name="Ryder H.F."/>
            <person name="Williamson S.C."/>
            <person name="Barbeau R.A."/>
            <person name="Hamilton E.P."/>
            <person name="Orias E."/>
        </authorList>
    </citation>
    <scope>NUCLEOTIDE SEQUENCE [LARGE SCALE GENOMIC DNA]</scope>
    <source>
        <strain evidence="7">SB210</strain>
    </source>
</reference>
<reference key="2">
    <citation type="journal article" date="2021" name="PLoS Genet.">
        <title>Ccdc113/Ccdc96 complex, a novel regulator of ciliary beating that connects radial spoke 3 to dynein g and the nexin link.</title>
        <authorList>
            <person name="Bazan R."/>
            <person name="Schroefel A."/>
            <person name="Joachimiak E."/>
            <person name="Poprzeczko M."/>
            <person name="Pigino G."/>
            <person name="Wloga D."/>
        </authorList>
    </citation>
    <scope>FUNCTION</scope>
    <scope>INTERACTION WITH CFAP263</scope>
    <scope>SUBCELLULAR LOCATION</scope>
    <scope>DISRUPTION PHENOTYPE</scope>
</reference>
<protein>
    <recommendedName>
        <fullName>Cilia- and flagella-associated protein 184</fullName>
    </recommendedName>
</protein>
<evidence type="ECO:0000255" key="1"/>
<evidence type="ECO:0000256" key="2">
    <source>
        <dbReference type="SAM" id="MobiDB-lite"/>
    </source>
</evidence>
<evidence type="ECO:0000269" key="3">
    <source>
    </source>
</evidence>
<evidence type="ECO:0000303" key="4">
    <source>
    </source>
</evidence>
<evidence type="ECO:0000305" key="5"/>
<evidence type="ECO:0000312" key="6">
    <source>
        <dbReference type="EMBL" id="EAR85013.1"/>
    </source>
</evidence>
<evidence type="ECO:0000312" key="7">
    <source>
        <dbReference type="Proteomes" id="UP000009168"/>
    </source>
</evidence>
<feature type="chain" id="PRO_0000460050" description="Cilia- and flagella-associated protein 184">
    <location>
        <begin position="1"/>
        <end position="794"/>
    </location>
</feature>
<feature type="region of interest" description="Disordered" evidence="2">
    <location>
        <begin position="1"/>
        <end position="105"/>
    </location>
</feature>
<feature type="region of interest" description="Disordered" evidence="2">
    <location>
        <begin position="386"/>
        <end position="458"/>
    </location>
</feature>
<feature type="region of interest" description="Disordered" evidence="2">
    <location>
        <begin position="774"/>
        <end position="794"/>
    </location>
</feature>
<feature type="coiled-coil region" evidence="1">
    <location>
        <begin position="461"/>
        <end position="613"/>
    </location>
</feature>
<feature type="coiled-coil region" evidence="1">
    <location>
        <begin position="638"/>
        <end position="775"/>
    </location>
</feature>
<feature type="compositionally biased region" description="Low complexity" evidence="2">
    <location>
        <begin position="24"/>
        <end position="35"/>
    </location>
</feature>
<feature type="compositionally biased region" description="Acidic residues" evidence="2">
    <location>
        <begin position="49"/>
        <end position="69"/>
    </location>
</feature>
<feature type="compositionally biased region" description="Basic and acidic residues" evidence="2">
    <location>
        <begin position="89"/>
        <end position="103"/>
    </location>
</feature>
<feature type="compositionally biased region" description="Basic and acidic residues" evidence="2">
    <location>
        <begin position="386"/>
        <end position="411"/>
    </location>
</feature>
<feature type="compositionally biased region" description="Basic and acidic residues" evidence="2">
    <location>
        <begin position="431"/>
        <end position="445"/>
    </location>
</feature>
<feature type="compositionally biased region" description="Low complexity" evidence="2">
    <location>
        <begin position="446"/>
        <end position="456"/>
    </location>
</feature>
<feature type="compositionally biased region" description="Polar residues" evidence="2">
    <location>
        <begin position="774"/>
        <end position="787"/>
    </location>
</feature>
<gene>
    <name type="primary">CFAP184</name>
    <name evidence="4" type="synonym">CCDC96</name>
    <name evidence="6" type="ORF">TTHERM_00529650</name>
</gene>
<name>CF184_TETTS</name>
<accession>I7M6D6</accession>
<dbReference type="EMBL" id="GG662522">
    <property type="protein sequence ID" value="EAR85013.1"/>
    <property type="molecule type" value="Genomic_DNA"/>
</dbReference>
<dbReference type="RefSeq" id="XP_001032676.1">
    <property type="nucleotide sequence ID" value="XM_001032676.2"/>
</dbReference>
<dbReference type="PDB" id="8TEK">
    <property type="method" value="EM"/>
    <property type="resolution" value="3.60 A"/>
    <property type="chains" value="P=1-794"/>
</dbReference>
<dbReference type="PDB" id="8TH8">
    <property type="method" value="EM"/>
    <property type="resolution" value="7.40 A"/>
    <property type="chains" value="P=1-794"/>
</dbReference>
<dbReference type="PDB" id="8TID">
    <property type="method" value="EM"/>
    <property type="resolution" value="3.60 A"/>
    <property type="chains" value="P=1-794"/>
</dbReference>
<dbReference type="PDBsum" id="8TEK"/>
<dbReference type="PDBsum" id="8TH8"/>
<dbReference type="PDBsum" id="8TID"/>
<dbReference type="EMDB" id="EMD-41189"/>
<dbReference type="EMDB" id="EMD-41251"/>
<dbReference type="EMDB" id="EMD-41284"/>
<dbReference type="SMR" id="I7M6D6"/>
<dbReference type="STRING" id="312017.I7M6D6"/>
<dbReference type="EnsemblProtists" id="EAR85013">
    <property type="protein sequence ID" value="EAR85013"/>
    <property type="gene ID" value="TTHERM_00529650"/>
</dbReference>
<dbReference type="GeneID" id="7837826"/>
<dbReference type="KEGG" id="tet:TTHERM_00529650"/>
<dbReference type="eggNOG" id="ENOG502QS75">
    <property type="taxonomic scope" value="Eukaryota"/>
</dbReference>
<dbReference type="HOGENOM" id="CLU_404653_0_0_1"/>
<dbReference type="InParanoid" id="I7M6D6"/>
<dbReference type="OMA" id="KLYMEMH"/>
<dbReference type="OrthoDB" id="10254794at2759"/>
<dbReference type="Proteomes" id="UP000009168">
    <property type="component" value="Unassembled WGS sequence"/>
</dbReference>
<dbReference type="GO" id="GO:0005930">
    <property type="term" value="C:axoneme"/>
    <property type="evidence" value="ECO:0007669"/>
    <property type="project" value="TreeGrafter"/>
</dbReference>
<dbReference type="GO" id="GO:0036064">
    <property type="term" value="C:ciliary basal body"/>
    <property type="evidence" value="ECO:0007669"/>
    <property type="project" value="TreeGrafter"/>
</dbReference>
<dbReference type="GO" id="GO:0060271">
    <property type="term" value="P:cilium assembly"/>
    <property type="evidence" value="ECO:0007669"/>
    <property type="project" value="TreeGrafter"/>
</dbReference>
<dbReference type="CDD" id="cd05379">
    <property type="entry name" value="CAP_bacterial"/>
    <property type="match status" value="1"/>
</dbReference>
<dbReference type="Gene3D" id="3.40.33.10">
    <property type="entry name" value="CAP"/>
    <property type="match status" value="1"/>
</dbReference>
<dbReference type="InterPro" id="IPR056294">
    <property type="entry name" value="CAP-like_CFAP184"/>
</dbReference>
<dbReference type="InterPro" id="IPR035940">
    <property type="entry name" value="CAP_sf"/>
</dbReference>
<dbReference type="InterPro" id="IPR056295">
    <property type="entry name" value="CBM-like_CFAP184"/>
</dbReference>
<dbReference type="InterPro" id="IPR051885">
    <property type="entry name" value="CC_domain-Cilium_Assoc"/>
</dbReference>
<dbReference type="InterPro" id="IPR025254">
    <property type="entry name" value="CCDC113/CCDC96_CC"/>
</dbReference>
<dbReference type="PANTHER" id="PTHR15654">
    <property type="entry name" value="COILED-COIL DOMAIN-CONTAINING PROTEIN 113-RELATED"/>
    <property type="match status" value="1"/>
</dbReference>
<dbReference type="PANTHER" id="PTHR15654:SF1">
    <property type="entry name" value="COILED-COIL DOMAIN-CONTAINING PROTEIN 96"/>
    <property type="match status" value="1"/>
</dbReference>
<dbReference type="Pfam" id="PF23448">
    <property type="entry name" value="CAP-like_CFAP184"/>
    <property type="match status" value="1"/>
</dbReference>
<dbReference type="Pfam" id="PF23449">
    <property type="entry name" value="CBM-like_CFAP184"/>
    <property type="match status" value="1"/>
</dbReference>
<dbReference type="Pfam" id="PF13870">
    <property type="entry name" value="CCDC113_CCDC96_CC"/>
    <property type="match status" value="1"/>
</dbReference>
<proteinExistence type="evidence at protein level"/>
<organism evidence="6 7">
    <name type="scientific">Tetrahymena thermophila (strain SB210)</name>
    <dbReference type="NCBI Taxonomy" id="312017"/>
    <lineage>
        <taxon>Eukaryota</taxon>
        <taxon>Sar</taxon>
        <taxon>Alveolata</taxon>
        <taxon>Ciliophora</taxon>
        <taxon>Intramacronucleata</taxon>
        <taxon>Oligohymenophorea</taxon>
        <taxon>Hymenostomatida</taxon>
        <taxon>Tetrahymenina</taxon>
        <taxon>Tetrahymenidae</taxon>
        <taxon>Tetrahymena</taxon>
    </lineage>
</organism>
<sequence length="794" mass="94402">MASEDGEMPSQFEGIDPEQLTESQMQQYMMEMQRQGLLDSNMEGGQYEEGYEEGQEGEGYGEEYGDQDYDGNQNEYDSQQDSQQQGHDQVNEMHQDRYDRRVNSEISGNYEADDETLRKIRRDLLDNINLERRHRDLQPVYIDLTTNNISQYYSEYLVNNEHNQDFYENAKVRYNNLGECELCHITAKFEPDADITKEYIYDYFMEIGYLFLESEEEKRIILNPANNHIGIGVFFDEIQIVVVLILSEKVLCIQKISQPEQNKIEIRGKMLDENFGIYAIRIMNVDDQKKDIKGVGPEFIEYTRSTQEWMASFELELYNQDRMAIEYYTRVSPDSIPYKKKQSKNEKLTYKHLQLRLRTPFQIYPDPKYAAEDEKERIRKEQEILAHEEQERKEREENDAKRLKQSRKDYGDGQYDDDEHGQDDFNSQSDISDKDKHHDSMHAEQEQNQQAAQQQQDTISNKEIRQELEMAITEAQRQHDEFMLQNHKLQEEIKLLKNKNDGFVDRSNETAMNEHKYLNTLAHVHQIRLDLKQTQTRYNQMSQELQKKLEQKQKKCNEIKYAFLELKREVAKKAANSRTDKPIPEQQINEWEKAELQKSKELQELRLQILRLRNAYVKNQKILKKKEELAEGLHLIDFEQLKIENQTLNEKIEERNEELHKLKKKNTTTIQILTHTREKLGFVQGENGELNSQNVRKDQELDDMRKQLTQQKKTKDKLRSVNLTLKQQTGIVNSEELGQDYRDLRTRVSKLEEEKKRLEQKLRSMHEAIKTANQISTQNMQSQNNSLKKPYQPY</sequence>
<comment type="function">
    <text evidence="3">In complex with CFAP263, acts as a regulator of ciliary beating that connects radial spoke 3 (RS3) to the inner dynein arm (IDA) and the nexin-dynein regulatory complex (N-DRC). The complex is positioned parallel to N-DRC and forms a connection between the arch at the base of RS3, the IDA tail and N-DRC.</text>
</comment>
<comment type="subunit">
    <text evidence="3">Forms a complex with CFAP263; the interaction is required for functional activity in cilia.</text>
</comment>
<comment type="subcellular location">
    <subcellularLocation>
        <location evidence="3">Cell projection</location>
        <location evidence="3">Cilium</location>
    </subcellularLocation>
    <text evidence="3">Localizes at cilium but not at the ciliary tips.</text>
</comment>
<comment type="disruption phenotype">
    <text evidence="3">Mutants swimming speed is reduced compared to wild-type with trajectories wavy and kinky. Cilia length is not affected.</text>
</comment>
<comment type="similarity">
    <text evidence="5">Belongs to the CFAP184 family.</text>
</comment>